<protein>
    <recommendedName>
        <fullName>Retinaldehyde dehydrogenase 3</fullName>
        <shortName>RALDH-3</shortName>
        <shortName evidence="6">RalDH3</shortName>
        <ecNumber evidence="3">1.2.1.36</ecNumber>
    </recommendedName>
    <alternativeName>
        <fullName evidence="6">Aldehyde dehydrogenase 6</fullName>
    </alternativeName>
    <alternativeName>
        <fullName>Aldehyde dehydrogenase family 1 member A3</fullName>
        <shortName>Aldh1a3</shortName>
    </alternativeName>
</protein>
<name>AL1A3_RAT</name>
<keyword id="KW-0007">Acetylation</keyword>
<keyword id="KW-0963">Cytoplasm</keyword>
<keyword id="KW-0443">Lipid metabolism</keyword>
<keyword id="KW-0520">NAD</keyword>
<keyword id="KW-0560">Oxidoreductase</keyword>
<keyword id="KW-1185">Reference proteome</keyword>
<dbReference type="EC" id="1.2.1.36" evidence="3"/>
<dbReference type="EMBL" id="AF434845">
    <property type="protein sequence ID" value="AAN03711.1"/>
    <property type="molecule type" value="mRNA"/>
</dbReference>
<dbReference type="RefSeq" id="NP_695212.1">
    <property type="nucleotide sequence ID" value="NM_153300.1"/>
</dbReference>
<dbReference type="SMR" id="Q8K4D8"/>
<dbReference type="FunCoup" id="Q8K4D8">
    <property type="interactions" value="113"/>
</dbReference>
<dbReference type="STRING" id="10116.ENSRNOP00000069212"/>
<dbReference type="GlyGen" id="Q8K4D8">
    <property type="glycosylation" value="1 site"/>
</dbReference>
<dbReference type="PhosphoSitePlus" id="Q8K4D8"/>
<dbReference type="PaxDb" id="10116-ENSRNOP00000045261"/>
<dbReference type="GeneID" id="266603"/>
<dbReference type="KEGG" id="rno:266603"/>
<dbReference type="UCSC" id="RGD:628662">
    <property type="organism name" value="rat"/>
</dbReference>
<dbReference type="AGR" id="RGD:628662"/>
<dbReference type="CTD" id="220"/>
<dbReference type="RGD" id="628662">
    <property type="gene designation" value="Aldh1a3"/>
</dbReference>
<dbReference type="eggNOG" id="KOG2450">
    <property type="taxonomic scope" value="Eukaryota"/>
</dbReference>
<dbReference type="InParanoid" id="Q8K4D8"/>
<dbReference type="OrthoDB" id="310895at2759"/>
<dbReference type="PhylomeDB" id="Q8K4D8"/>
<dbReference type="BRENDA" id="1.2.1.36">
    <property type="organism ID" value="5301"/>
</dbReference>
<dbReference type="Reactome" id="R-RNO-5365859">
    <property type="pathway name" value="RA biosynthesis pathway"/>
</dbReference>
<dbReference type="UniPathway" id="UPA00912"/>
<dbReference type="PRO" id="PR:Q8K4D8"/>
<dbReference type="Proteomes" id="UP000002494">
    <property type="component" value="Unplaced"/>
</dbReference>
<dbReference type="GO" id="GO:0005737">
    <property type="term" value="C:cytoplasm"/>
    <property type="evidence" value="ECO:0000266"/>
    <property type="project" value="RGD"/>
</dbReference>
<dbReference type="GO" id="GO:0004029">
    <property type="term" value="F:aldehyde dehydrogenase (NAD+) activity"/>
    <property type="evidence" value="ECO:0000266"/>
    <property type="project" value="RGD"/>
</dbReference>
<dbReference type="GO" id="GO:0004030">
    <property type="term" value="F:aldehyde dehydrogenase [NAD(P)+] activity"/>
    <property type="evidence" value="ECO:0000314"/>
    <property type="project" value="RGD"/>
</dbReference>
<dbReference type="GO" id="GO:0070403">
    <property type="term" value="F:NAD+ binding"/>
    <property type="evidence" value="ECO:0000266"/>
    <property type="project" value="RGD"/>
</dbReference>
<dbReference type="GO" id="GO:0042803">
    <property type="term" value="F:protein homodimerization activity"/>
    <property type="evidence" value="ECO:0000266"/>
    <property type="project" value="RGD"/>
</dbReference>
<dbReference type="GO" id="GO:0001758">
    <property type="term" value="F:retinal dehydrogenase activity"/>
    <property type="evidence" value="ECO:0000250"/>
    <property type="project" value="UniProtKB"/>
</dbReference>
<dbReference type="GO" id="GO:0070324">
    <property type="term" value="F:thyroid hormone binding"/>
    <property type="evidence" value="ECO:0000266"/>
    <property type="project" value="RGD"/>
</dbReference>
<dbReference type="GO" id="GO:0006915">
    <property type="term" value="P:apoptotic process"/>
    <property type="evidence" value="ECO:0000266"/>
    <property type="project" value="RGD"/>
</dbReference>
<dbReference type="GO" id="GO:0031076">
    <property type="term" value="P:embryonic camera-type eye development"/>
    <property type="evidence" value="ECO:0000266"/>
    <property type="project" value="RGD"/>
</dbReference>
<dbReference type="GO" id="GO:0048048">
    <property type="term" value="P:embryonic eye morphogenesis"/>
    <property type="evidence" value="ECO:0000266"/>
    <property type="project" value="RGD"/>
</dbReference>
<dbReference type="GO" id="GO:0060324">
    <property type="term" value="P:face development"/>
    <property type="evidence" value="ECO:0000266"/>
    <property type="project" value="RGD"/>
</dbReference>
<dbReference type="GO" id="GO:0070384">
    <property type="term" value="P:Harderian gland development"/>
    <property type="evidence" value="ECO:0000266"/>
    <property type="project" value="RGD"/>
</dbReference>
<dbReference type="GO" id="GO:0042472">
    <property type="term" value="P:inner ear morphogenesis"/>
    <property type="evidence" value="ECO:0000266"/>
    <property type="project" value="RGD"/>
</dbReference>
<dbReference type="GO" id="GO:0001822">
    <property type="term" value="P:kidney development"/>
    <property type="evidence" value="ECO:0000270"/>
    <property type="project" value="RGD"/>
</dbReference>
<dbReference type="GO" id="GO:0007626">
    <property type="term" value="P:locomotory behavior"/>
    <property type="evidence" value="ECO:0000266"/>
    <property type="project" value="RGD"/>
</dbReference>
<dbReference type="GO" id="GO:0050885">
    <property type="term" value="P:neuromuscular process controlling balance"/>
    <property type="evidence" value="ECO:0000266"/>
    <property type="project" value="RGD"/>
</dbReference>
<dbReference type="GO" id="GO:0043584">
    <property type="term" value="P:nose development"/>
    <property type="evidence" value="ECO:0000266"/>
    <property type="project" value="RGD"/>
</dbReference>
<dbReference type="GO" id="GO:0021768">
    <property type="term" value="P:nucleus accumbens development"/>
    <property type="evidence" value="ECO:0000266"/>
    <property type="project" value="RGD"/>
</dbReference>
<dbReference type="GO" id="GO:0060166">
    <property type="term" value="P:olfactory pit development"/>
    <property type="evidence" value="ECO:0000266"/>
    <property type="project" value="RGD"/>
</dbReference>
<dbReference type="GO" id="GO:0002072">
    <property type="term" value="P:optic cup morphogenesis involved in camera-type eye development"/>
    <property type="evidence" value="ECO:0000266"/>
    <property type="project" value="RGD"/>
</dbReference>
<dbReference type="GO" id="GO:0021983">
    <property type="term" value="P:pituitary gland development"/>
    <property type="evidence" value="ECO:0000270"/>
    <property type="project" value="RGD"/>
</dbReference>
<dbReference type="GO" id="GO:0043065">
    <property type="term" value="P:positive regulation of apoptotic process"/>
    <property type="evidence" value="ECO:0000266"/>
    <property type="project" value="RGD"/>
</dbReference>
<dbReference type="GO" id="GO:0051289">
    <property type="term" value="P:protein homotetramerization"/>
    <property type="evidence" value="ECO:0000250"/>
    <property type="project" value="UniProtKB"/>
</dbReference>
<dbReference type="GO" id="GO:0009410">
    <property type="term" value="P:response to xenobiotic stimulus"/>
    <property type="evidence" value="ECO:0000270"/>
    <property type="project" value="RGD"/>
</dbReference>
<dbReference type="GO" id="GO:0042574">
    <property type="term" value="P:retinal metabolic process"/>
    <property type="evidence" value="ECO:0000266"/>
    <property type="project" value="RGD"/>
</dbReference>
<dbReference type="GO" id="GO:0002138">
    <property type="term" value="P:retinoic acid biosynthetic process"/>
    <property type="evidence" value="ECO:0000315"/>
    <property type="project" value="RGD"/>
</dbReference>
<dbReference type="GO" id="GO:0042573">
    <property type="term" value="P:retinoic acid metabolic process"/>
    <property type="evidence" value="ECO:0000266"/>
    <property type="project" value="RGD"/>
</dbReference>
<dbReference type="GO" id="GO:0042572">
    <property type="term" value="P:retinol metabolic process"/>
    <property type="evidence" value="ECO:0007669"/>
    <property type="project" value="UniProtKB-UniPathway"/>
</dbReference>
<dbReference type="GO" id="GO:0060013">
    <property type="term" value="P:righting reflex"/>
    <property type="evidence" value="ECO:0000266"/>
    <property type="project" value="RGD"/>
</dbReference>
<dbReference type="CDD" id="cd07141">
    <property type="entry name" value="ALDH_F1AB_F2_RALDH1"/>
    <property type="match status" value="1"/>
</dbReference>
<dbReference type="FunFam" id="3.40.605.10:FF:000054">
    <property type="entry name" value="Aldehyde dehydrogenase family 1 member A3"/>
    <property type="match status" value="1"/>
</dbReference>
<dbReference type="FunFam" id="3.40.605.10:FF:000026">
    <property type="entry name" value="Aldehyde dehydrogenase, putative"/>
    <property type="match status" value="1"/>
</dbReference>
<dbReference type="FunFam" id="3.40.309.10:FF:000001">
    <property type="entry name" value="Mitochondrial aldehyde dehydrogenase 2"/>
    <property type="match status" value="1"/>
</dbReference>
<dbReference type="Gene3D" id="3.40.605.10">
    <property type="entry name" value="Aldehyde Dehydrogenase, Chain A, domain 1"/>
    <property type="match status" value="1"/>
</dbReference>
<dbReference type="Gene3D" id="3.40.309.10">
    <property type="entry name" value="Aldehyde Dehydrogenase, Chain A, domain 2"/>
    <property type="match status" value="1"/>
</dbReference>
<dbReference type="InterPro" id="IPR016161">
    <property type="entry name" value="Ald_DH/histidinol_DH"/>
</dbReference>
<dbReference type="InterPro" id="IPR016163">
    <property type="entry name" value="Ald_DH_C"/>
</dbReference>
<dbReference type="InterPro" id="IPR016160">
    <property type="entry name" value="Ald_DH_CS_CYS"/>
</dbReference>
<dbReference type="InterPro" id="IPR016162">
    <property type="entry name" value="Ald_DH_N"/>
</dbReference>
<dbReference type="InterPro" id="IPR015590">
    <property type="entry name" value="Aldehyde_DH_dom"/>
</dbReference>
<dbReference type="PANTHER" id="PTHR11699">
    <property type="entry name" value="ALDEHYDE DEHYDROGENASE-RELATED"/>
    <property type="match status" value="1"/>
</dbReference>
<dbReference type="Pfam" id="PF00171">
    <property type="entry name" value="Aldedh"/>
    <property type="match status" value="1"/>
</dbReference>
<dbReference type="SUPFAM" id="SSF53720">
    <property type="entry name" value="ALDH-like"/>
    <property type="match status" value="1"/>
</dbReference>
<dbReference type="PROSITE" id="PS00070">
    <property type="entry name" value="ALDEHYDE_DEHYDR_CYS"/>
    <property type="match status" value="1"/>
</dbReference>
<organism>
    <name type="scientific">Rattus norvegicus</name>
    <name type="common">Rat</name>
    <dbReference type="NCBI Taxonomy" id="10116"/>
    <lineage>
        <taxon>Eukaryota</taxon>
        <taxon>Metazoa</taxon>
        <taxon>Chordata</taxon>
        <taxon>Craniata</taxon>
        <taxon>Vertebrata</taxon>
        <taxon>Euteleostomi</taxon>
        <taxon>Mammalia</taxon>
        <taxon>Eutheria</taxon>
        <taxon>Euarchontoglires</taxon>
        <taxon>Glires</taxon>
        <taxon>Rodentia</taxon>
        <taxon>Myomorpha</taxon>
        <taxon>Muroidea</taxon>
        <taxon>Muridae</taxon>
        <taxon>Murinae</taxon>
        <taxon>Rattus</taxon>
    </lineage>
</organism>
<reference key="1">
    <citation type="journal article" date="2002" name="Biol. Reprod.">
        <title>A novel short-chain alcohol dehydrogenase from rats with retinol dehydrogenase activity, cyclically expressed in uterine epithelium.</title>
        <authorList>
            <person name="Rexer B.N."/>
            <person name="Ong D.E."/>
        </authorList>
    </citation>
    <scope>NUCLEOTIDE SEQUENCE [MRNA]</scope>
    <scope>FUNCTION</scope>
    <source>
        <strain>Sprague-Dawley</strain>
    </source>
</reference>
<sequence length="512" mass="56171">MATANGAVENGQPDGKPPALPRPIRNLEVKFTKIFINNDWHEPKSGRKFATYNPSTLEKICEVEEGDKPDVDKAVEAAQAAFQRGSPWRRLDALSRGQLLHQLADLIERDRAILATLETMDTGKPFLHAFFVDLEGCIKTFRYFAGWADKIQGRTIPTDDNVMCFTRHEPIGVCGAITPWNFPLLMLAWKLAPALCCGNTVVLKPAEQTPLTALYLASLIKEVGFPPGVVNIVPGFGPTVGAAISSHPQINKIAFTGSTEVGKLVKEAASRSNLKRVTLELGGRNPCIVCADADLDLAVECAHQGVFFNQGQCCTAASRVFVEEQVYGEFVRRSVEFAKKRPVGDPFDAKTEQGPQIDQKQFDKILELIESGKKEGAKLECGGSAMEDRGLFIKPTVFSDVTDNMRIAKEEIFGPVQPILKFKNLEEVIKRANSTDYGLTAAVFTKNLDKALKLASALESGTVWVNCYNAFYAQAPFGGFKMSGNGRELGEYALAEYTEVKTVTIKLDEKNP</sequence>
<proteinExistence type="evidence at transcript level"/>
<comment type="function">
    <text evidence="2 3 8">Catalyzes the NAD-dependent oxidation of aldehyde substrates, such as all-trans-retinal and all-trans-13,14-dihydroretinal, to their corresponding carboxylic acids, all-trans-retinoate and all-trans-13,14-dihydroretinoate, respectively (Probable). High specificity for all-trans-retinal as substrate, can also accept acetaldehyde as substrate in vitro but with lower affinity (By similarity). Required for the biosynthesis of normal levels of retinoate in the embryonic ocular and nasal regions; a critical lipid in the embryonic development of the eye and the nasal region (By similarity).</text>
</comment>
<comment type="catalytic activity">
    <reaction evidence="2">
        <text>all-trans-retinal + NAD(+) + H2O = all-trans-retinoate + NADH + 2 H(+)</text>
        <dbReference type="Rhea" id="RHEA:42080"/>
        <dbReference type="ChEBI" id="CHEBI:15377"/>
        <dbReference type="ChEBI" id="CHEBI:15378"/>
        <dbReference type="ChEBI" id="CHEBI:17898"/>
        <dbReference type="ChEBI" id="CHEBI:35291"/>
        <dbReference type="ChEBI" id="CHEBI:57540"/>
        <dbReference type="ChEBI" id="CHEBI:57945"/>
        <dbReference type="EC" id="1.2.1.36"/>
    </reaction>
    <physiologicalReaction direction="left-to-right" evidence="2">
        <dbReference type="Rhea" id="RHEA:42081"/>
    </physiologicalReaction>
</comment>
<comment type="catalytic activity">
    <reaction evidence="2">
        <text>retinal + NAD(+) + H2O = retinoate + NADH + 2 H(+)</text>
        <dbReference type="Rhea" id="RHEA:16177"/>
        <dbReference type="ChEBI" id="CHEBI:15035"/>
        <dbReference type="ChEBI" id="CHEBI:15036"/>
        <dbReference type="ChEBI" id="CHEBI:15377"/>
        <dbReference type="ChEBI" id="CHEBI:15378"/>
        <dbReference type="ChEBI" id="CHEBI:57540"/>
        <dbReference type="ChEBI" id="CHEBI:57945"/>
        <dbReference type="EC" id="1.2.1.36"/>
    </reaction>
    <physiologicalReaction direction="left-to-right" evidence="2">
        <dbReference type="Rhea" id="RHEA:16178"/>
    </physiologicalReaction>
</comment>
<comment type="catalytic activity">
    <reaction evidence="3">
        <text>all-trans-13,14-dihydroretinal + NAD(+) + H2O = all-trans-13,14-dihydroretinoate + NADH + 2 H(+)</text>
        <dbReference type="Rhea" id="RHEA:75119"/>
        <dbReference type="ChEBI" id="CHEBI:15377"/>
        <dbReference type="ChEBI" id="CHEBI:15378"/>
        <dbReference type="ChEBI" id="CHEBI:57540"/>
        <dbReference type="ChEBI" id="CHEBI:57945"/>
        <dbReference type="ChEBI" id="CHEBI:194182"/>
        <dbReference type="ChEBI" id="CHEBI:194183"/>
    </reaction>
    <physiologicalReaction direction="left-to-right" evidence="3">
        <dbReference type="Rhea" id="RHEA:75120"/>
    </physiologicalReaction>
</comment>
<comment type="pathway">
    <text evidence="2">Cofactor metabolism; retinol metabolism.</text>
</comment>
<comment type="subunit">
    <text evidence="2">Homotetramer.</text>
</comment>
<comment type="subcellular location">
    <subcellularLocation>
        <location evidence="3">Cytoplasm</location>
    </subcellularLocation>
</comment>
<comment type="similarity">
    <text evidence="7">Belongs to the aldehyde dehydrogenase family.</text>
</comment>
<feature type="initiator methionine" description="Removed" evidence="2">
    <location>
        <position position="1"/>
    </location>
</feature>
<feature type="chain" id="PRO_0000056480" description="Retinaldehyde dehydrogenase 3">
    <location>
        <begin position="2"/>
        <end position="512"/>
    </location>
</feature>
<feature type="region of interest" description="Disordered" evidence="5">
    <location>
        <begin position="1"/>
        <end position="23"/>
    </location>
</feature>
<feature type="active site" description="Proton acceptor" evidence="4">
    <location>
        <position position="280"/>
    </location>
</feature>
<feature type="active site" description="Nucleophile" evidence="4">
    <location>
        <position position="314"/>
    </location>
</feature>
<feature type="binding site" evidence="2">
    <location>
        <position position="204"/>
    </location>
    <ligand>
        <name>NAD(+)</name>
        <dbReference type="ChEBI" id="CHEBI:57540"/>
    </ligand>
</feature>
<feature type="binding site" evidence="2">
    <location>
        <position position="207"/>
    </location>
    <ligand>
        <name>NAD(+)</name>
        <dbReference type="ChEBI" id="CHEBI:57540"/>
    </ligand>
</feature>
<feature type="binding site" evidence="2">
    <location>
        <begin position="257"/>
        <end position="262"/>
    </location>
    <ligand>
        <name>NAD(+)</name>
        <dbReference type="ChEBI" id="CHEBI:57540"/>
    </ligand>
</feature>
<feature type="binding site" evidence="2">
    <location>
        <position position="361"/>
    </location>
    <ligand>
        <name>NAD(+)</name>
        <dbReference type="ChEBI" id="CHEBI:57540"/>
    </ligand>
</feature>
<feature type="binding site" evidence="2">
    <location>
        <position position="411"/>
    </location>
    <ligand>
        <name>NAD(+)</name>
        <dbReference type="ChEBI" id="CHEBI:57540"/>
    </ligand>
</feature>
<feature type="site" description="Transition state stabilizer" evidence="1">
    <location>
        <position position="181"/>
    </location>
</feature>
<feature type="modified residue" description="N-acetylalanine" evidence="2">
    <location>
        <position position="2"/>
    </location>
</feature>
<gene>
    <name type="primary">Aldh1a3</name>
    <name type="synonym">Aldh6</name>
    <name type="synonym">Raldh3</name>
</gene>
<evidence type="ECO:0000250" key="1"/>
<evidence type="ECO:0000250" key="2">
    <source>
        <dbReference type="UniProtKB" id="P47895"/>
    </source>
</evidence>
<evidence type="ECO:0000250" key="3">
    <source>
        <dbReference type="UniProtKB" id="Q9JHW9"/>
    </source>
</evidence>
<evidence type="ECO:0000255" key="4">
    <source>
        <dbReference type="PROSITE-ProRule" id="PRU10008"/>
    </source>
</evidence>
<evidence type="ECO:0000256" key="5">
    <source>
        <dbReference type="SAM" id="MobiDB-lite"/>
    </source>
</evidence>
<evidence type="ECO:0000303" key="6">
    <source>
    </source>
</evidence>
<evidence type="ECO:0000305" key="7"/>
<evidence type="ECO:0000305" key="8">
    <source>
    </source>
</evidence>
<accession>Q8K4D8</accession>